<protein>
    <recommendedName>
        <fullName>Cytochrome b</fullName>
    </recommendedName>
</protein>
<feature type="chain" id="PRO_0000280934" description="Cytochrome b">
    <location>
        <begin position="1"/>
        <end position="398"/>
    </location>
</feature>
<feature type="transmembrane region" description="Helical" evidence="2">
    <location>
        <begin position="45"/>
        <end position="65"/>
    </location>
</feature>
<feature type="transmembrane region" description="Helical" evidence="2">
    <location>
        <begin position="96"/>
        <end position="116"/>
    </location>
</feature>
<feature type="transmembrane region" description="Helical" evidence="2">
    <location>
        <begin position="129"/>
        <end position="149"/>
    </location>
</feature>
<feature type="transmembrane region" description="Helical" evidence="2">
    <location>
        <begin position="164"/>
        <end position="184"/>
    </location>
</feature>
<feature type="transmembrane region" description="Helical" evidence="2">
    <location>
        <begin position="192"/>
        <end position="212"/>
    </location>
</feature>
<feature type="transmembrane region" description="Helical" evidence="2">
    <location>
        <begin position="245"/>
        <end position="265"/>
    </location>
</feature>
<feature type="transmembrane region" description="Helical" evidence="2">
    <location>
        <begin position="277"/>
        <end position="297"/>
    </location>
</feature>
<feature type="transmembrane region" description="Helical" evidence="2">
    <location>
        <begin position="304"/>
        <end position="324"/>
    </location>
</feature>
<feature type="transmembrane region" description="Helical" evidence="2">
    <location>
        <begin position="339"/>
        <end position="359"/>
    </location>
</feature>
<feature type="transmembrane region" description="Helical" evidence="2">
    <location>
        <begin position="366"/>
        <end position="386"/>
    </location>
</feature>
<feature type="binding site" description="axial binding residue">
    <location>
        <position position="95"/>
    </location>
    <ligand>
        <name>heme b</name>
        <dbReference type="ChEBI" id="CHEBI:60344"/>
        <label>b562</label>
    </ligand>
    <ligandPart>
        <name>Fe</name>
        <dbReference type="ChEBI" id="CHEBI:18248"/>
    </ligandPart>
</feature>
<feature type="binding site" description="axial binding residue">
    <location>
        <position position="109"/>
    </location>
    <ligand>
        <name>heme b</name>
        <dbReference type="ChEBI" id="CHEBI:60344"/>
        <label>b566</label>
    </ligand>
    <ligandPart>
        <name>Fe</name>
        <dbReference type="ChEBI" id="CHEBI:18248"/>
    </ligandPart>
</feature>
<feature type="binding site" description="axial binding residue">
    <location>
        <position position="196"/>
    </location>
    <ligand>
        <name>heme b</name>
        <dbReference type="ChEBI" id="CHEBI:60344"/>
        <label>b562</label>
    </ligand>
    <ligandPart>
        <name>Fe</name>
        <dbReference type="ChEBI" id="CHEBI:18248"/>
    </ligandPart>
</feature>
<feature type="binding site" description="axial binding residue">
    <location>
        <position position="210"/>
    </location>
    <ligand>
        <name>heme b</name>
        <dbReference type="ChEBI" id="CHEBI:60344"/>
        <label>b566</label>
    </ligand>
    <ligandPart>
        <name>Fe</name>
        <dbReference type="ChEBI" id="CHEBI:18248"/>
    </ligandPart>
</feature>
<proteinExistence type="inferred from homology"/>
<keyword id="KW-1003">Cell membrane</keyword>
<keyword id="KW-0249">Electron transport</keyword>
<keyword id="KW-0349">Heme</keyword>
<keyword id="KW-0408">Iron</keyword>
<keyword id="KW-0472">Membrane</keyword>
<keyword id="KW-0479">Metal-binding</keyword>
<keyword id="KW-0679">Respiratory chain</keyword>
<keyword id="KW-0812">Transmembrane</keyword>
<keyword id="KW-1133">Transmembrane helix</keyword>
<keyword id="KW-0813">Transport</keyword>
<accession>Q92IR1</accession>
<dbReference type="EMBL" id="AE006914">
    <property type="protein sequence ID" value="AAL02897.1"/>
    <property type="molecule type" value="Genomic_DNA"/>
</dbReference>
<dbReference type="PIR" id="G97744">
    <property type="entry name" value="G97744"/>
</dbReference>
<dbReference type="RefSeq" id="WP_010977014.1">
    <property type="nucleotide sequence ID" value="NC_003103.1"/>
</dbReference>
<dbReference type="SMR" id="Q92IR1"/>
<dbReference type="GeneID" id="928546"/>
<dbReference type="KEGG" id="rco:RC0359"/>
<dbReference type="PATRIC" id="fig|272944.4.peg.408"/>
<dbReference type="HOGENOM" id="CLU_031114_3_0_5"/>
<dbReference type="Proteomes" id="UP000000816">
    <property type="component" value="Chromosome"/>
</dbReference>
<dbReference type="GO" id="GO:0005886">
    <property type="term" value="C:plasma membrane"/>
    <property type="evidence" value="ECO:0007669"/>
    <property type="project" value="UniProtKB-SubCell"/>
</dbReference>
<dbReference type="GO" id="GO:0045275">
    <property type="term" value="C:respiratory chain complex III"/>
    <property type="evidence" value="ECO:0007669"/>
    <property type="project" value="InterPro"/>
</dbReference>
<dbReference type="GO" id="GO:0046872">
    <property type="term" value="F:metal ion binding"/>
    <property type="evidence" value="ECO:0007669"/>
    <property type="project" value="UniProtKB-KW"/>
</dbReference>
<dbReference type="GO" id="GO:0008121">
    <property type="term" value="F:ubiquinol-cytochrome-c reductase activity"/>
    <property type="evidence" value="ECO:0007669"/>
    <property type="project" value="InterPro"/>
</dbReference>
<dbReference type="GO" id="GO:0022904">
    <property type="term" value="P:respiratory electron transport chain"/>
    <property type="evidence" value="ECO:0007669"/>
    <property type="project" value="InterPro"/>
</dbReference>
<dbReference type="CDD" id="cd00290">
    <property type="entry name" value="cytochrome_b_C"/>
    <property type="match status" value="1"/>
</dbReference>
<dbReference type="CDD" id="cd00284">
    <property type="entry name" value="Cytochrome_b_N"/>
    <property type="match status" value="1"/>
</dbReference>
<dbReference type="FunFam" id="1.20.810.10:FF:000002">
    <property type="entry name" value="Cytochrome b"/>
    <property type="match status" value="1"/>
</dbReference>
<dbReference type="Gene3D" id="1.20.810.10">
    <property type="entry name" value="Cytochrome Bc1 Complex, Chain C"/>
    <property type="match status" value="1"/>
</dbReference>
<dbReference type="InterPro" id="IPR005798">
    <property type="entry name" value="Cyt_b/b6_C"/>
</dbReference>
<dbReference type="InterPro" id="IPR036150">
    <property type="entry name" value="Cyt_b/b6_C_sf"/>
</dbReference>
<dbReference type="InterPro" id="IPR005797">
    <property type="entry name" value="Cyt_b/b6_N"/>
</dbReference>
<dbReference type="InterPro" id="IPR027387">
    <property type="entry name" value="Cytb/b6-like_sf"/>
</dbReference>
<dbReference type="InterPro" id="IPR030689">
    <property type="entry name" value="Cytochrome_b"/>
</dbReference>
<dbReference type="InterPro" id="IPR048260">
    <property type="entry name" value="Cytochrome_b_C_euk/bac"/>
</dbReference>
<dbReference type="InterPro" id="IPR048259">
    <property type="entry name" value="Cytochrome_b_N_euk/bac"/>
</dbReference>
<dbReference type="InterPro" id="IPR016174">
    <property type="entry name" value="Di-haem_cyt_TM"/>
</dbReference>
<dbReference type="PANTHER" id="PTHR19271">
    <property type="entry name" value="CYTOCHROME B"/>
    <property type="match status" value="1"/>
</dbReference>
<dbReference type="PANTHER" id="PTHR19271:SF16">
    <property type="entry name" value="CYTOCHROME B"/>
    <property type="match status" value="1"/>
</dbReference>
<dbReference type="Pfam" id="PF00032">
    <property type="entry name" value="Cytochrom_B_C"/>
    <property type="match status" value="1"/>
</dbReference>
<dbReference type="Pfam" id="PF00033">
    <property type="entry name" value="Cytochrome_B"/>
    <property type="match status" value="1"/>
</dbReference>
<dbReference type="PIRSF" id="PIRSF038885">
    <property type="entry name" value="COB"/>
    <property type="match status" value="1"/>
</dbReference>
<dbReference type="SUPFAM" id="SSF81648">
    <property type="entry name" value="a domain/subunit of cytochrome bc1 complex (Ubiquinol-cytochrome c reductase)"/>
    <property type="match status" value="1"/>
</dbReference>
<dbReference type="SUPFAM" id="SSF81342">
    <property type="entry name" value="Transmembrane di-heme cytochromes"/>
    <property type="match status" value="1"/>
</dbReference>
<dbReference type="PROSITE" id="PS51003">
    <property type="entry name" value="CYTB_CTER"/>
    <property type="match status" value="1"/>
</dbReference>
<dbReference type="PROSITE" id="PS51002">
    <property type="entry name" value="CYTB_NTER"/>
    <property type="match status" value="1"/>
</dbReference>
<organism>
    <name type="scientific">Rickettsia conorii (strain ATCC VR-613 / Malish 7)</name>
    <dbReference type="NCBI Taxonomy" id="272944"/>
    <lineage>
        <taxon>Bacteria</taxon>
        <taxon>Pseudomonadati</taxon>
        <taxon>Pseudomonadota</taxon>
        <taxon>Alphaproteobacteria</taxon>
        <taxon>Rickettsiales</taxon>
        <taxon>Rickettsiaceae</taxon>
        <taxon>Rickettsieae</taxon>
        <taxon>Rickettsia</taxon>
        <taxon>spotted fever group</taxon>
    </lineage>
</organism>
<gene>
    <name type="primary">petB</name>
    <name type="synonym">cytB</name>
    <name type="ordered locus">RC0359</name>
</gene>
<sequence length="398" mass="45829">MNEDITPKKPNAIIEWIDYRLPIFAFLKHFSHYQTPKNLNYLWNLGSIAGIALVIQIITGVILAMHYTPHVDHAFDSVERIMRNVNYGWLLRYTHAVGASMFFAAVYLHIARGLYYGSYKAPRELLWHIGIIIFLTMMATAFMGYVLPWGQMSYWGATVITNLFSAIPLIGEFIVTWLWGGFSVDNPTLNRFFSLHYLLPFIIVALVMLHLVALHQHGSNNPKGIDVKSPKDTIPFHPYYTVKDFVGFGVYFIIFAYFIFYEPNYLGHPDNYIPANPLVTPAHIVPEWYFLPFYAILRAMPSKLGGVLLMFGSIFVLFLLPWLDTSKVRSSNYRPIYRMAFWIFMADCLLLGYLGGQPAEEPYITISRFAACYYFFHVLVALPLIGKYEKPLPLPEEL</sequence>
<reference key="1">
    <citation type="journal article" date="2001" name="Science">
        <title>Mechanisms of evolution in Rickettsia conorii and R. prowazekii.</title>
        <authorList>
            <person name="Ogata H."/>
            <person name="Audic S."/>
            <person name="Renesto-Audiffren P."/>
            <person name="Fournier P.-E."/>
            <person name="Barbe V."/>
            <person name="Samson D."/>
            <person name="Roux V."/>
            <person name="Cossart P."/>
            <person name="Weissenbach J."/>
            <person name="Claverie J.-M."/>
            <person name="Raoult D."/>
        </authorList>
    </citation>
    <scope>NUCLEOTIDE SEQUENCE [LARGE SCALE GENOMIC DNA]</scope>
    <source>
        <strain>ATCC VR-613 / Malish 7</strain>
    </source>
</reference>
<comment type="function">
    <text evidence="1">Component of the ubiquinol-cytochrome c reductase complex (complex III or cytochrome b-c1 complex), which is a respiratory chain that generates an electrochemical potential coupled to ATP synthesis.</text>
</comment>
<comment type="cofactor">
    <cofactor evidence="1">
        <name>heme b</name>
        <dbReference type="ChEBI" id="CHEBI:60344"/>
    </cofactor>
    <text evidence="1">Binds 2 heme b groups non-covalently.</text>
</comment>
<comment type="subunit">
    <text evidence="1">The main subunits of complex b-c1 are: cytochrome b, cytochrome c1 and the Rieske protein.</text>
</comment>
<comment type="subcellular location">
    <subcellularLocation>
        <location evidence="5">Cell membrane</location>
        <topology evidence="5">Multi-pass membrane protein</topology>
    </subcellularLocation>
</comment>
<comment type="miscellaneous">
    <text evidence="1">Heme 1 (or BL or b562) is low-potential and absorbs at about 562 nm, and heme 2 (or BH or b566) is high-potential and absorbs at about 566 nm.</text>
</comment>
<comment type="similarity">
    <text evidence="3 4">Belongs to the cytochrome b family.</text>
</comment>
<name>CYB_RICCN</name>
<evidence type="ECO:0000250" key="1"/>
<evidence type="ECO:0000255" key="2"/>
<evidence type="ECO:0000255" key="3">
    <source>
        <dbReference type="PROSITE-ProRule" id="PRU00967"/>
    </source>
</evidence>
<evidence type="ECO:0000255" key="4">
    <source>
        <dbReference type="PROSITE-ProRule" id="PRU00968"/>
    </source>
</evidence>
<evidence type="ECO:0000305" key="5"/>